<accession>Q9SMP0</accession>
<accession>O23635</accession>
<proteinExistence type="evidence at protein level"/>
<protein>
    <recommendedName>
        <fullName>Nuclear transcription factor Y subunit C-1</fullName>
        <shortName>AtNF-YC-1</shortName>
    </recommendedName>
    <alternativeName>
        <fullName>Transcriptional activator HAP5A</fullName>
    </alternativeName>
</protein>
<reference key="1">
    <citation type="journal article" date="2000" name="Nature">
        <title>Sequence and analysis of chromosome 3 of the plant Arabidopsis thaliana.</title>
        <authorList>
            <person name="Salanoubat M."/>
            <person name="Lemcke K."/>
            <person name="Rieger M."/>
            <person name="Ansorge W."/>
            <person name="Unseld M."/>
            <person name="Fartmann B."/>
            <person name="Valle G."/>
            <person name="Bloecker H."/>
            <person name="Perez-Alonso M."/>
            <person name="Obermaier B."/>
            <person name="Delseny M."/>
            <person name="Boutry M."/>
            <person name="Grivell L.A."/>
            <person name="Mache R."/>
            <person name="Puigdomenech P."/>
            <person name="De Simone V."/>
            <person name="Choisne N."/>
            <person name="Artiguenave F."/>
            <person name="Robert C."/>
            <person name="Brottier P."/>
            <person name="Wincker P."/>
            <person name="Cattolico L."/>
            <person name="Weissenbach J."/>
            <person name="Saurin W."/>
            <person name="Quetier F."/>
            <person name="Schaefer M."/>
            <person name="Mueller-Auer S."/>
            <person name="Gabel C."/>
            <person name="Fuchs M."/>
            <person name="Benes V."/>
            <person name="Wurmbach E."/>
            <person name="Drzonek H."/>
            <person name="Erfle H."/>
            <person name="Jordan N."/>
            <person name="Bangert S."/>
            <person name="Wiedelmann R."/>
            <person name="Kranz H."/>
            <person name="Voss H."/>
            <person name="Holland R."/>
            <person name="Brandt P."/>
            <person name="Nyakatura G."/>
            <person name="Vezzi A."/>
            <person name="D'Angelo M."/>
            <person name="Pallavicini A."/>
            <person name="Toppo S."/>
            <person name="Simionati B."/>
            <person name="Conrad A."/>
            <person name="Hornischer K."/>
            <person name="Kauer G."/>
            <person name="Loehnert T.-H."/>
            <person name="Nordsiek G."/>
            <person name="Reichelt J."/>
            <person name="Scharfe M."/>
            <person name="Schoen O."/>
            <person name="Bargues M."/>
            <person name="Terol J."/>
            <person name="Climent J."/>
            <person name="Navarro P."/>
            <person name="Collado C."/>
            <person name="Perez-Perez A."/>
            <person name="Ottenwaelder B."/>
            <person name="Duchemin D."/>
            <person name="Cooke R."/>
            <person name="Laudie M."/>
            <person name="Berger-Llauro C."/>
            <person name="Purnelle B."/>
            <person name="Masuy D."/>
            <person name="de Haan M."/>
            <person name="Maarse A.C."/>
            <person name="Alcaraz J.-P."/>
            <person name="Cottet A."/>
            <person name="Casacuberta E."/>
            <person name="Monfort A."/>
            <person name="Argiriou A."/>
            <person name="Flores M."/>
            <person name="Liguori R."/>
            <person name="Vitale D."/>
            <person name="Mannhaupt G."/>
            <person name="Haase D."/>
            <person name="Schoof H."/>
            <person name="Rudd S."/>
            <person name="Zaccaria P."/>
            <person name="Mewes H.-W."/>
            <person name="Mayer K.F.X."/>
            <person name="Kaul S."/>
            <person name="Town C.D."/>
            <person name="Koo H.L."/>
            <person name="Tallon L.J."/>
            <person name="Jenkins J."/>
            <person name="Rooney T."/>
            <person name="Rizzo M."/>
            <person name="Walts A."/>
            <person name="Utterback T."/>
            <person name="Fujii C.Y."/>
            <person name="Shea T.P."/>
            <person name="Creasy T.H."/>
            <person name="Haas B."/>
            <person name="Maiti R."/>
            <person name="Wu D."/>
            <person name="Peterson J."/>
            <person name="Van Aken S."/>
            <person name="Pai G."/>
            <person name="Militscher J."/>
            <person name="Sellers P."/>
            <person name="Gill J.E."/>
            <person name="Feldblyum T.V."/>
            <person name="Preuss D."/>
            <person name="Lin X."/>
            <person name="Nierman W.C."/>
            <person name="Salzberg S.L."/>
            <person name="White O."/>
            <person name="Venter J.C."/>
            <person name="Fraser C.M."/>
            <person name="Kaneko T."/>
            <person name="Nakamura Y."/>
            <person name="Sato S."/>
            <person name="Kato T."/>
            <person name="Asamizu E."/>
            <person name="Sasamoto S."/>
            <person name="Kimura T."/>
            <person name="Idesawa K."/>
            <person name="Kawashima K."/>
            <person name="Kishida Y."/>
            <person name="Kiyokawa C."/>
            <person name="Kohara M."/>
            <person name="Matsumoto M."/>
            <person name="Matsuno A."/>
            <person name="Muraki A."/>
            <person name="Nakayama S."/>
            <person name="Nakazaki N."/>
            <person name="Shinpo S."/>
            <person name="Takeuchi C."/>
            <person name="Wada T."/>
            <person name="Watanabe A."/>
            <person name="Yamada M."/>
            <person name="Yasuda M."/>
            <person name="Tabata S."/>
        </authorList>
    </citation>
    <scope>NUCLEOTIDE SEQUENCE [LARGE SCALE GENOMIC DNA]</scope>
    <source>
        <strain>cv. Columbia</strain>
    </source>
</reference>
<reference key="2">
    <citation type="journal article" date="2017" name="Plant J.">
        <title>Araport11: a complete reannotation of the Arabidopsis thaliana reference genome.</title>
        <authorList>
            <person name="Cheng C.Y."/>
            <person name="Krishnakumar V."/>
            <person name="Chan A.P."/>
            <person name="Thibaud-Nissen F."/>
            <person name="Schobel S."/>
            <person name="Town C.D."/>
        </authorList>
    </citation>
    <scope>GENOME REANNOTATION</scope>
    <source>
        <strain>cv. Columbia</strain>
    </source>
</reference>
<reference key="3">
    <citation type="journal article" date="2003" name="Science">
        <title>Empirical analysis of transcriptional activity in the Arabidopsis genome.</title>
        <authorList>
            <person name="Yamada K."/>
            <person name="Lim J."/>
            <person name="Dale J.M."/>
            <person name="Chen H."/>
            <person name="Shinn P."/>
            <person name="Palm C.J."/>
            <person name="Southwick A.M."/>
            <person name="Wu H.C."/>
            <person name="Kim C.J."/>
            <person name="Nguyen M."/>
            <person name="Pham P.K."/>
            <person name="Cheuk R.F."/>
            <person name="Karlin-Newmann G."/>
            <person name="Liu S.X."/>
            <person name="Lam B."/>
            <person name="Sakano H."/>
            <person name="Wu T."/>
            <person name="Yu G."/>
            <person name="Miranda M."/>
            <person name="Quach H.L."/>
            <person name="Tripp M."/>
            <person name="Chang C.H."/>
            <person name="Lee J.M."/>
            <person name="Toriumi M.J."/>
            <person name="Chan M.M."/>
            <person name="Tang C.C."/>
            <person name="Onodera C.S."/>
            <person name="Deng J.M."/>
            <person name="Akiyama K."/>
            <person name="Ansari Y."/>
            <person name="Arakawa T."/>
            <person name="Banh J."/>
            <person name="Banno F."/>
            <person name="Bowser L."/>
            <person name="Brooks S.Y."/>
            <person name="Carninci P."/>
            <person name="Chao Q."/>
            <person name="Choy N."/>
            <person name="Enju A."/>
            <person name="Goldsmith A.D."/>
            <person name="Gurjal M."/>
            <person name="Hansen N.F."/>
            <person name="Hayashizaki Y."/>
            <person name="Johnson-Hopson C."/>
            <person name="Hsuan V.W."/>
            <person name="Iida K."/>
            <person name="Karnes M."/>
            <person name="Khan S."/>
            <person name="Koesema E."/>
            <person name="Ishida J."/>
            <person name="Jiang P.X."/>
            <person name="Jones T."/>
            <person name="Kawai J."/>
            <person name="Kamiya A."/>
            <person name="Meyers C."/>
            <person name="Nakajima M."/>
            <person name="Narusaka M."/>
            <person name="Seki M."/>
            <person name="Sakurai T."/>
            <person name="Satou M."/>
            <person name="Tamse R."/>
            <person name="Vaysberg M."/>
            <person name="Wallender E.K."/>
            <person name="Wong C."/>
            <person name="Yamamura Y."/>
            <person name="Yuan S."/>
            <person name="Shinozaki K."/>
            <person name="Davis R.W."/>
            <person name="Theologis A."/>
            <person name="Ecker J.R."/>
        </authorList>
    </citation>
    <scope>NUCLEOTIDE SEQUENCE [LARGE SCALE MRNA]</scope>
    <source>
        <strain>cv. Columbia</strain>
    </source>
</reference>
<reference key="4">
    <citation type="submission" date="2002-03" db="EMBL/GenBank/DDBJ databases">
        <title>Full-length cDNA from Arabidopsis thaliana.</title>
        <authorList>
            <person name="Brover V.V."/>
            <person name="Troukhan M.E."/>
            <person name="Alexandrov N.A."/>
            <person name="Lu Y.-P."/>
            <person name="Flavell R.B."/>
            <person name="Feldmann K.A."/>
        </authorList>
    </citation>
    <scope>NUCLEOTIDE SEQUENCE [LARGE SCALE MRNA]</scope>
</reference>
<reference key="5">
    <citation type="journal article" date="1998" name="Plant Physiol.">
        <title>Multiple genes encoding the conserved CCAAT-box transcription factor complex are expressed in Arabidopsis.</title>
        <authorList>
            <person name="Edwards D."/>
            <person name="Murray J.A.H."/>
            <person name="Smith A.G."/>
        </authorList>
    </citation>
    <scope>NUCLEOTIDE SEQUENCE [MRNA] OF 80-155</scope>
    <scope>TISSUE SPECIFICITY</scope>
</reference>
<reference key="6">
    <citation type="journal article" date="2001" name="Gene">
        <title>Regulation of the CCAAT-binding NF-Y subunits in Arabidopsis thaliana.</title>
        <authorList>
            <person name="Gusmaroli G."/>
            <person name="Tonelli C."/>
            <person name="Mantovani R."/>
        </authorList>
    </citation>
    <scope>TISSUE SPECIFICITY</scope>
</reference>
<reference key="7">
    <citation type="journal article" date="2002" name="Gene">
        <title>Regulation of novel members of the Arabidopsis thaliana CCAAT-binding nuclear factor Y subunits.</title>
        <authorList>
            <person name="Gusmaroli G."/>
            <person name="Tonelli C."/>
            <person name="Mantovani R."/>
        </authorList>
    </citation>
    <scope>GENE FAMILY</scope>
    <scope>NOMENCLATURE</scope>
</reference>
<reference key="8">
    <citation type="journal article" date="2007" name="Plant Physiol.">
        <title>The GCR1, GPA1, PRN1, NF-Y signal chain mediates both blue light and abscisic acid responses in Arabidopsis.</title>
        <authorList>
            <person name="Warpeha K.M."/>
            <person name="Upadhyay S."/>
            <person name="Yeh J."/>
            <person name="Adamiak J."/>
            <person name="Hawkins S.I."/>
            <person name="Lapik Y.R."/>
            <person name="Anderson M.B."/>
            <person name="Kaufman L.S."/>
        </authorList>
    </citation>
    <scope>TISSUE SPECIFICITY</scope>
    <source>
        <strain>cv. Columbia</strain>
        <strain>cv. Wassilewskija</strain>
    </source>
</reference>
<sequence>MDTNNQQPPPSAAGIPPPPPGTTISAAGGGASYHHLLQQQQQQLQLFWTYQRQEIEQVNDFKNHQLPLARIKKIMKADEDVRMISAEAPILFAKACELFILELTIRSWLHAEENKRRTLQKNDIAAAITRTDIFDFLVDIVPRDEIKDEAAVLGGGMVVAPTASGVPYYYPPMGQPAGPGGMMIGRPAMDPNGVYVQPPSQAWQSVWQTSTGTGDDVSYGSGGSSGQGNLDGQG</sequence>
<name>NFYC1_ARATH</name>
<evidence type="ECO:0000250" key="1"/>
<evidence type="ECO:0000256" key="2">
    <source>
        <dbReference type="SAM" id="MobiDB-lite"/>
    </source>
</evidence>
<evidence type="ECO:0000269" key="3">
    <source>
    </source>
</evidence>
<evidence type="ECO:0000269" key="4">
    <source>
    </source>
</evidence>
<evidence type="ECO:0000269" key="5">
    <source>
    </source>
</evidence>
<evidence type="ECO:0000305" key="6"/>
<gene>
    <name type="primary">NFYC1</name>
    <name type="synonym">HAP5A</name>
    <name type="ordered locus">At3g48590</name>
    <name type="ORF">T8P19.100</name>
</gene>
<feature type="chain" id="PRO_0000218250" description="Nuclear transcription factor Y subunit C-1">
    <location>
        <begin position="1"/>
        <end position="234"/>
    </location>
</feature>
<feature type="region of interest" description="Disordered" evidence="2">
    <location>
        <begin position="1"/>
        <end position="20"/>
    </location>
</feature>
<feature type="region of interest" description="Disordered" evidence="2">
    <location>
        <begin position="205"/>
        <end position="234"/>
    </location>
</feature>
<feature type="compositionally biased region" description="Pro residues" evidence="2">
    <location>
        <begin position="7"/>
        <end position="20"/>
    </location>
</feature>
<feature type="compositionally biased region" description="Low complexity" evidence="2">
    <location>
        <begin position="209"/>
        <end position="219"/>
    </location>
</feature>
<feature type="compositionally biased region" description="Gly residues" evidence="2">
    <location>
        <begin position="220"/>
        <end position="234"/>
    </location>
</feature>
<comment type="function">
    <text evidence="1">Stimulates the transcription of various genes by recognizing and binding to a CCAAT motif in promoters.</text>
</comment>
<comment type="subunit">
    <text evidence="1">Heterotrimeric transcription factor composed of three components, NF-YA, NF-YB and NF-YC. NF-YB and NF-YC must interact and dimerize for NF-YA association and DNA binding (By similarity).</text>
</comment>
<comment type="interaction">
    <interactant intactId="EBI-2125944">
        <id>Q9SMP0</id>
    </interactant>
    <interactant intactId="EBI-15192959">
        <id>A0A178U8Q1</id>
        <label>AXX17_At5g59430</label>
    </interactant>
    <organismsDiffer>false</organismsDiffer>
    <experiments>3</experiments>
</comment>
<comment type="interaction">
    <interactant intactId="EBI-2125944">
        <id>Q9SMP0</id>
    </interactant>
    <interactant intactId="EBI-1639724">
        <id>Q39057</id>
        <label>CO</label>
    </interactant>
    <organismsDiffer>false</organismsDiffer>
    <experiments>8</experiments>
</comment>
<comment type="interaction">
    <interactant intactId="EBI-2125944">
        <id>Q9SMP0</id>
    </interactant>
    <interactant intactId="EBI-15192513">
        <id>Q944I5</id>
        <label>NF-YB12</label>
    </interactant>
    <organismsDiffer>false</organismsDiffer>
    <experiments>3</experiments>
</comment>
<comment type="interaction">
    <interactant intactId="EBI-2125944">
        <id>Q9SMP0</id>
    </interactant>
    <interactant intactId="EBI-15191941">
        <id>Q945M9</id>
        <label>NFYA9</label>
    </interactant>
    <organismsDiffer>false</organismsDiffer>
    <experiments>3</experiments>
</comment>
<comment type="interaction">
    <interactant intactId="EBI-2125944">
        <id>Q9SMP0</id>
    </interactant>
    <interactant intactId="EBI-4459822">
        <id>Q9SIT9</id>
        <label>NFYB7</label>
    </interactant>
    <organismsDiffer>false</organismsDiffer>
    <experiments>3</experiments>
</comment>
<comment type="subcellular location">
    <subcellularLocation>
        <location evidence="1">Nucleus</location>
    </subcellularLocation>
</comment>
<comment type="tissue specificity">
    <text evidence="3 4 5">Ubiquitous. Present in etiolated seedlings.</text>
</comment>
<comment type="similarity">
    <text evidence="6">Belongs to the NFYC/HAP5 subunit family.</text>
</comment>
<organism>
    <name type="scientific">Arabidopsis thaliana</name>
    <name type="common">Mouse-ear cress</name>
    <dbReference type="NCBI Taxonomy" id="3702"/>
    <lineage>
        <taxon>Eukaryota</taxon>
        <taxon>Viridiplantae</taxon>
        <taxon>Streptophyta</taxon>
        <taxon>Embryophyta</taxon>
        <taxon>Tracheophyta</taxon>
        <taxon>Spermatophyta</taxon>
        <taxon>Magnoliopsida</taxon>
        <taxon>eudicotyledons</taxon>
        <taxon>Gunneridae</taxon>
        <taxon>Pentapetalae</taxon>
        <taxon>rosids</taxon>
        <taxon>malvids</taxon>
        <taxon>Brassicales</taxon>
        <taxon>Brassicaceae</taxon>
        <taxon>Camelineae</taxon>
        <taxon>Arabidopsis</taxon>
    </lineage>
</organism>
<dbReference type="EMBL" id="AL133315">
    <property type="protein sequence ID" value="CAB62348.1"/>
    <property type="molecule type" value="Genomic_DNA"/>
</dbReference>
<dbReference type="EMBL" id="CP002686">
    <property type="protein sequence ID" value="AEE78434.1"/>
    <property type="molecule type" value="Genomic_DNA"/>
</dbReference>
<dbReference type="EMBL" id="AY092997">
    <property type="protein sequence ID" value="AAM12996.1"/>
    <property type="molecule type" value="mRNA"/>
</dbReference>
<dbReference type="EMBL" id="BT001206">
    <property type="protein sequence ID" value="AAN65093.1"/>
    <property type="molecule type" value="mRNA"/>
</dbReference>
<dbReference type="EMBL" id="AY086120">
    <property type="protein sequence ID" value="AAM63326.1"/>
    <property type="molecule type" value="mRNA"/>
</dbReference>
<dbReference type="EMBL" id="Y13726">
    <property type="protein sequence ID" value="CAA74054.1"/>
    <property type="molecule type" value="mRNA"/>
</dbReference>
<dbReference type="PIR" id="T46203">
    <property type="entry name" value="T46203"/>
</dbReference>
<dbReference type="RefSeq" id="NP_190428.1">
    <property type="nucleotide sequence ID" value="NM_114718.4"/>
</dbReference>
<dbReference type="SMR" id="Q9SMP0"/>
<dbReference type="BioGRID" id="9337">
    <property type="interactions" value="50"/>
</dbReference>
<dbReference type="FunCoup" id="Q9SMP0">
    <property type="interactions" value="1118"/>
</dbReference>
<dbReference type="IntAct" id="Q9SMP0">
    <property type="interactions" value="39"/>
</dbReference>
<dbReference type="STRING" id="3702.Q9SMP0"/>
<dbReference type="GlyGen" id="Q9SMP0">
    <property type="glycosylation" value="1 site"/>
</dbReference>
<dbReference type="PaxDb" id="3702-AT3G48590.1"/>
<dbReference type="EnsemblPlants" id="AT3G48590.1">
    <property type="protein sequence ID" value="AT3G48590.1"/>
    <property type="gene ID" value="AT3G48590"/>
</dbReference>
<dbReference type="GeneID" id="824019"/>
<dbReference type="Gramene" id="AT3G48590.1">
    <property type="protein sequence ID" value="AT3G48590.1"/>
    <property type="gene ID" value="AT3G48590"/>
</dbReference>
<dbReference type="KEGG" id="ath:AT3G48590"/>
<dbReference type="Araport" id="AT3G48590"/>
<dbReference type="TAIR" id="AT3G48590">
    <property type="gene designation" value="NF-YC1"/>
</dbReference>
<dbReference type="eggNOG" id="KOG1657">
    <property type="taxonomic scope" value="Eukaryota"/>
</dbReference>
<dbReference type="HOGENOM" id="CLU_045277_0_1_1"/>
<dbReference type="InParanoid" id="Q9SMP0"/>
<dbReference type="OMA" id="EDNSYAG"/>
<dbReference type="OrthoDB" id="1272441at2759"/>
<dbReference type="PhylomeDB" id="Q9SMP0"/>
<dbReference type="PRO" id="PR:Q9SMP0"/>
<dbReference type="Proteomes" id="UP000006548">
    <property type="component" value="Chromosome 3"/>
</dbReference>
<dbReference type="ExpressionAtlas" id="Q9SMP0">
    <property type="expression patterns" value="baseline and differential"/>
</dbReference>
<dbReference type="GO" id="GO:0016602">
    <property type="term" value="C:CCAAT-binding factor complex"/>
    <property type="evidence" value="ECO:0000250"/>
    <property type="project" value="TAIR"/>
</dbReference>
<dbReference type="GO" id="GO:0005829">
    <property type="term" value="C:cytosol"/>
    <property type="evidence" value="ECO:0007005"/>
    <property type="project" value="TAIR"/>
</dbReference>
<dbReference type="GO" id="GO:0005634">
    <property type="term" value="C:nucleus"/>
    <property type="evidence" value="ECO:0000314"/>
    <property type="project" value="TAIR"/>
</dbReference>
<dbReference type="GO" id="GO:0003677">
    <property type="term" value="F:DNA binding"/>
    <property type="evidence" value="ECO:0007669"/>
    <property type="project" value="UniProtKB-KW"/>
</dbReference>
<dbReference type="GO" id="GO:0003700">
    <property type="term" value="F:DNA-binding transcription factor activity"/>
    <property type="evidence" value="ECO:0000250"/>
    <property type="project" value="TAIR"/>
</dbReference>
<dbReference type="GO" id="GO:0046982">
    <property type="term" value="F:protein heterodimerization activity"/>
    <property type="evidence" value="ECO:0007669"/>
    <property type="project" value="InterPro"/>
</dbReference>
<dbReference type="GO" id="GO:0045893">
    <property type="term" value="P:positive regulation of DNA-templated transcription"/>
    <property type="evidence" value="ECO:0000314"/>
    <property type="project" value="TAIR"/>
</dbReference>
<dbReference type="GO" id="GO:2000306">
    <property type="term" value="P:positive regulation of photomorphogenesis"/>
    <property type="evidence" value="ECO:0000315"/>
    <property type="project" value="TAIR"/>
</dbReference>
<dbReference type="GO" id="GO:0006355">
    <property type="term" value="P:regulation of DNA-templated transcription"/>
    <property type="evidence" value="ECO:0000250"/>
    <property type="project" value="TAIR"/>
</dbReference>
<dbReference type="CDD" id="cd22908">
    <property type="entry name" value="HFD_NFYC-like"/>
    <property type="match status" value="1"/>
</dbReference>
<dbReference type="FunFam" id="1.10.20.10:FF:000006">
    <property type="entry name" value="Nuclear transcription factor Y subunit gamma"/>
    <property type="match status" value="1"/>
</dbReference>
<dbReference type="Gene3D" id="1.10.20.10">
    <property type="entry name" value="Histone, subunit A"/>
    <property type="match status" value="1"/>
</dbReference>
<dbReference type="InterPro" id="IPR009072">
    <property type="entry name" value="Histone-fold"/>
</dbReference>
<dbReference type="InterPro" id="IPR007125">
    <property type="entry name" value="Histone_H2A/H2B/H3"/>
</dbReference>
<dbReference type="InterPro" id="IPR050568">
    <property type="entry name" value="Transcr_DNA_Rep_Reg"/>
</dbReference>
<dbReference type="PANTHER" id="PTHR10252">
    <property type="entry name" value="HISTONE-LIKE TRANSCRIPTION FACTOR CCAAT-RELATED"/>
    <property type="match status" value="1"/>
</dbReference>
<dbReference type="PANTHER" id="PTHR10252:SF39">
    <property type="entry name" value="NUCLEAR TRANSCRIPTION FACTOR Y SUBUNIT C-6"/>
    <property type="match status" value="1"/>
</dbReference>
<dbReference type="Pfam" id="PF00125">
    <property type="entry name" value="Histone"/>
    <property type="match status" value="1"/>
</dbReference>
<dbReference type="SUPFAM" id="SSF47113">
    <property type="entry name" value="Histone-fold"/>
    <property type="match status" value="1"/>
</dbReference>
<keyword id="KW-0010">Activator</keyword>
<keyword id="KW-0238">DNA-binding</keyword>
<keyword id="KW-0539">Nucleus</keyword>
<keyword id="KW-1185">Reference proteome</keyword>
<keyword id="KW-0804">Transcription</keyword>
<keyword id="KW-0805">Transcription regulation</keyword>